<comment type="function">
    <text evidence="1">Binds to the 60S ribosomal subunit and prevents its association with the 40S ribosomal subunit to form the 80S initiation complex in the cytoplasm. Is also involved in ribosome biogenesis. Associates with pre-60S subunits in the nucleus and is involved in its nuclear export.</text>
</comment>
<comment type="subunit">
    <text evidence="1">Monomer. Associates with the 60S ribosomal subunit.</text>
</comment>
<comment type="subcellular location">
    <subcellularLocation>
        <location evidence="1">Cytoplasm</location>
    </subcellularLocation>
    <subcellularLocation>
        <location evidence="1">Nucleus</location>
        <location evidence="1">Nucleolus</location>
    </subcellularLocation>
    <text evidence="1">Shuttles between cytoplasm and nucleus/nucleolus.</text>
</comment>
<comment type="similarity">
    <text evidence="1">Belongs to the eIF-6 family.</text>
</comment>
<organism>
    <name type="scientific">Encephalitozoon cuniculi (strain GB-M1)</name>
    <name type="common">Microsporidian parasite</name>
    <dbReference type="NCBI Taxonomy" id="284813"/>
    <lineage>
        <taxon>Eukaryota</taxon>
        <taxon>Fungi</taxon>
        <taxon>Fungi incertae sedis</taxon>
        <taxon>Microsporidia</taxon>
        <taxon>Unikaryonidae</taxon>
        <taxon>Encephalitozoon</taxon>
    </lineage>
</organism>
<dbReference type="EMBL" id="AL590444">
    <property type="protein sequence ID" value="CAD25265.2"/>
    <property type="molecule type" value="Genomic_DNA"/>
</dbReference>
<dbReference type="RefSeq" id="NP_584761.1">
    <property type="nucleotide sequence ID" value="NM_001041111.1"/>
</dbReference>
<dbReference type="SMR" id="Q8SS47"/>
<dbReference type="FunCoup" id="Q8SS47">
    <property type="interactions" value="256"/>
</dbReference>
<dbReference type="STRING" id="284813.Q8SS47"/>
<dbReference type="GeneID" id="858909"/>
<dbReference type="KEGG" id="ecu:ECU04_0780"/>
<dbReference type="VEuPathDB" id="MicrosporidiaDB:ECU04_0780"/>
<dbReference type="HOGENOM" id="CLU_071894_0_0_1"/>
<dbReference type="InParanoid" id="Q8SS47"/>
<dbReference type="OrthoDB" id="4155914at2759"/>
<dbReference type="Proteomes" id="UP000000819">
    <property type="component" value="Chromosome IV"/>
</dbReference>
<dbReference type="GO" id="GO:0005737">
    <property type="term" value="C:cytoplasm"/>
    <property type="evidence" value="ECO:0007669"/>
    <property type="project" value="UniProtKB-SubCell"/>
</dbReference>
<dbReference type="GO" id="GO:0005730">
    <property type="term" value="C:nucleolus"/>
    <property type="evidence" value="ECO:0007669"/>
    <property type="project" value="UniProtKB-SubCell"/>
</dbReference>
<dbReference type="GO" id="GO:0043023">
    <property type="term" value="F:ribosomal large subunit binding"/>
    <property type="evidence" value="ECO:0007669"/>
    <property type="project" value="UniProtKB-UniRule"/>
</dbReference>
<dbReference type="GO" id="GO:0003743">
    <property type="term" value="F:translation initiation factor activity"/>
    <property type="evidence" value="ECO:0007669"/>
    <property type="project" value="UniProtKB-UniRule"/>
</dbReference>
<dbReference type="GO" id="GO:0042256">
    <property type="term" value="P:cytosolic ribosome assembly"/>
    <property type="evidence" value="ECO:0007669"/>
    <property type="project" value="UniProtKB-UniRule"/>
</dbReference>
<dbReference type="GO" id="GO:0042273">
    <property type="term" value="P:ribosomal large subunit biogenesis"/>
    <property type="evidence" value="ECO:0007669"/>
    <property type="project" value="UniProtKB-UniRule"/>
</dbReference>
<dbReference type="GO" id="GO:0000054">
    <property type="term" value="P:ribosomal subunit export from nucleus"/>
    <property type="evidence" value="ECO:0007669"/>
    <property type="project" value="UniProtKB-UniRule"/>
</dbReference>
<dbReference type="CDD" id="cd00527">
    <property type="entry name" value="IF6"/>
    <property type="match status" value="1"/>
</dbReference>
<dbReference type="Gene3D" id="3.75.10.10">
    <property type="entry name" value="L-arginine/glycine Amidinotransferase, Chain A"/>
    <property type="match status" value="1"/>
</dbReference>
<dbReference type="HAMAP" id="MF_00032">
    <property type="entry name" value="eIF_6"/>
    <property type="match status" value="1"/>
</dbReference>
<dbReference type="InterPro" id="IPR002769">
    <property type="entry name" value="eIF6"/>
</dbReference>
<dbReference type="NCBIfam" id="TIGR00323">
    <property type="entry name" value="eIF-6"/>
    <property type="match status" value="1"/>
</dbReference>
<dbReference type="PANTHER" id="PTHR10784">
    <property type="entry name" value="TRANSLATION INITIATION FACTOR 6"/>
    <property type="match status" value="1"/>
</dbReference>
<dbReference type="Pfam" id="PF01912">
    <property type="entry name" value="eIF-6"/>
    <property type="match status" value="1"/>
</dbReference>
<dbReference type="PIRSF" id="PIRSF006413">
    <property type="entry name" value="IF-6"/>
    <property type="match status" value="1"/>
</dbReference>
<dbReference type="SMART" id="SM00654">
    <property type="entry name" value="eIF6"/>
    <property type="match status" value="1"/>
</dbReference>
<dbReference type="SUPFAM" id="SSF55909">
    <property type="entry name" value="Pentein"/>
    <property type="match status" value="1"/>
</dbReference>
<feature type="chain" id="PRO_0000402108" description="Eukaryotic translation initiation factor 6">
    <location>
        <begin position="1"/>
        <end position="241"/>
    </location>
</feature>
<reference key="1">
    <citation type="journal article" date="2001" name="Nature">
        <title>Genome sequence and gene compaction of the eukaryote parasite Encephalitozoon cuniculi.</title>
        <authorList>
            <person name="Katinka M.D."/>
            <person name="Duprat S."/>
            <person name="Cornillot E."/>
            <person name="Metenier G."/>
            <person name="Thomarat F."/>
            <person name="Prensier G."/>
            <person name="Barbe V."/>
            <person name="Peyretaillade E."/>
            <person name="Brottier P."/>
            <person name="Wincker P."/>
            <person name="Delbac F."/>
            <person name="El Alaoui H."/>
            <person name="Peyret P."/>
            <person name="Saurin W."/>
            <person name="Gouy M."/>
            <person name="Weissenbach J."/>
            <person name="Vivares C.P."/>
        </authorList>
    </citation>
    <scope>NUCLEOTIDE SEQUENCE [LARGE SCALE GENOMIC DNA]</scope>
    <source>
        <strain>GB-M1</strain>
    </source>
</reference>
<reference key="2">
    <citation type="journal article" date="2009" name="BMC Genomics">
        <title>Identification of transcriptional signals in Encephalitozoon cuniculi widespread among Microsporidia phylum: support for accurate structural genome annotation.</title>
        <authorList>
            <person name="Peyretaillade E."/>
            <person name="Goncalves O."/>
            <person name="Terrat S."/>
            <person name="Dugat-Bony E."/>
            <person name="Wincker P."/>
            <person name="Cornman R.S."/>
            <person name="Evans J.D."/>
            <person name="Delbac F."/>
            <person name="Peyret P."/>
        </authorList>
    </citation>
    <scope>GENOME REANNOTATION</scope>
    <source>
        <strain>GB-M1</strain>
    </source>
</reference>
<name>IF6_ENCCU</name>
<keyword id="KW-0963">Cytoplasm</keyword>
<keyword id="KW-0396">Initiation factor</keyword>
<keyword id="KW-0539">Nucleus</keyword>
<keyword id="KW-0648">Protein biosynthesis</keyword>
<keyword id="KW-1185">Reference proteome</keyword>
<keyword id="KW-0690">Ribosome biogenesis</keyword>
<protein>
    <recommendedName>
        <fullName evidence="1">Eukaryotic translation initiation factor 6</fullName>
        <shortName evidence="1">eIF-6</shortName>
    </recommendedName>
</protein>
<evidence type="ECO:0000255" key="1">
    <source>
        <dbReference type="HAMAP-Rule" id="MF_03132"/>
    </source>
</evidence>
<proteinExistence type="inferred from homology"/>
<gene>
    <name evidence="1" type="primary">TIF6</name>
    <name type="ordered locus">ECU04_0780</name>
</gene>
<sequence>MSYRIDFEGSSEIGAYMSLTNTYCVIGRSQSNNVLKFLQENVAIPIVETTINSIRSVGSQCRGNRHGLLVPHTITDQEIMHIRNSLPEDVVVRRIEERLNALGNVILCNDHIAIIHGDLDKESEDLIRDVLQVHVYRQNIGQEPLVGTFGALNNQGMLVHPFTSTECQKELSELLEVNVVAGTINGGSQCVGGGVVANDWMCIAGIKTTNVEMAVIEGVFDLTGDQDLEARRRAIVDAIVR</sequence>
<accession>Q8SS47</accession>